<gene>
    <name evidence="38 40" type="primary">CUL4A</name>
</gene>
<comment type="function">
    <text evidence="6 7 8 9 10 11 12 14 15 18 25 27 28 29 31 32 33 34 35">Core component of multiple cullin-RING-based E3 ubiquitin-protein ligase complexes which mediate the ubiquitination of target proteins (PubMed:14578910, PubMed:14739464, PubMed:15448697, PubMed:15548678, PubMed:15811626, PubMed:16678110, PubMed:17041588, PubMed:24209620, PubMed:30166453, PubMed:33854232, PubMed:33854239). As a scaffold protein may contribute to catalysis through positioning of the substrate and the ubiquitin-conjugating enzyme (PubMed:14578910, PubMed:14739464, PubMed:15448697, PubMed:15548678, PubMed:15811626, PubMed:16678110, PubMed:17041588, PubMed:24209620). The E3 ubiquitin-protein ligase activity of the complex is dependent on the neddylation of the cullin subunit and is inhibited by the association of the deneddylated cullin subunit with TIP120A/CAND1 (PubMed:14578910, PubMed:14739464, PubMed:15448697, PubMed:15548678, PubMed:15811626, PubMed:16678110, PubMed:17041588, PubMed:24209620). The functional specificity of the E3 ubiquitin-protein ligase complex depends on the variable substrate recognition component (PubMed:14578910, PubMed:14739464, PubMed:15448697, PubMed:15548678, PubMed:15811626, PubMed:16678110, PubMed:17041588, PubMed:24209620). DCX(DET1-COP1) directs ubiquitination of JUN (PubMed:14739464). DCX(DDB2) directs ubiquitination of XPC (PubMed:15811626). DCX(DDB2) ubiquitinates histones H3-H4 and is required for efficient histone deposition during replication-coupled (H3.1) and replication-independent (H3.3) nucleosome assembly, probably by facilitating the transfer of H3 from ASF1A/ASF1B to other chaperones involved in histone deposition (PubMed:16678110, PubMed:17041588, PubMed:24209620). DCX(DTL) plays a role in PCNA-dependent polyubiquitination of CDT1 and MDM2-dependent ubiquitination of p53/TP53 in response to radiation-induced DNA damage and during DNA replication (PubMed:14578910, PubMed:15448697, PubMed:15548678). DCX(DTL) directs autoubiquitination of DTL (PubMed:23478445). In association with DDB1 and SKP2 probably is involved in ubiquitination of CDKN1B/p27kip (PubMed:16537899). Is involved in ubiquitination of HOXA9 (PubMed:14609952). The DDB1-CUL4A-DTL E3 ligase complex regulates the circadian clock function by mediating the ubiquitination and degradation of CRY1 (PubMed:26431207). The DCX(ERCC8) complex (also named CSA complex) plays a role in transcription-coupled repair (TCR) (PubMed:12732143, PubMed:32355176, PubMed:38316879). A number of DCX complexes (containing either TRPC4AP or DCAF12 as substrate-recognition component) are part of the DesCEND (destruction via C-end degrons) pathway, which recognizes a C-degron located at the extreme C terminus of target proteins, leading to their ubiquitination and degradation (PubMed:29779948). The DCX(AMBRA1) complex is a master regulator of the transition from G1 to S cell phase by mediating ubiquitination of phosphorylated cyclin-D (CCND1, CCND2 and CCND3) (PubMed:33854232, PubMed:33854239). The DCX(AMBRA1) complex also acts as a regulator of Cul5-RING (CRL5) E3 ubiquitin-protein ligase complexes by mediating ubiquitination and degradation of Elongin-C (ELOC) component of CRL5 complexes (PubMed:30166453). With CUL4B, contributes to ribosome biogenesis (PubMed:26711351).</text>
</comment>
<comment type="pathway">
    <text evidence="8 10 11 14 25 27 31 32 34 35 36">Protein modification; protein ubiquitination.</text>
</comment>
<comment type="subunit">
    <text evidence="3 5 6 7 8 9 10 11 12 13 14 15 16 17 18 19 20 22 23 24 26 28 30 31 32 33 34 35 36">Can self-associate (PubMed:17254749). Component of multiple DCX (DDB1-CUL4-X-box) E3 ubiquitin-protein ligase complexes that seem to consist of DDB1, CUL4A or CUL4B, RBX1 and a variable substrate recognition component which seems to belong to a protein family described as DCAF (Ddb1- and Cul4-associated factor) or CDW (CUL4-DDB1-associated WD40-repeat) proteins (PubMed:12732143, PubMed:14578910, PubMed:14739464, PubMed:15548678, PubMed:29779948, PubMed:30166453). Component of the CSA complex (DCX(ERCC8) complex) containing ERCC8, RBX1, DDB1 and CUL4A; the CSA complex interacts with RNA polymerase II; upon UV irradiation it interacts with the COP9 signalosome and preferentially with the hyperphosphorylated form of RNA polymerase II (PubMed:12732143, PubMed:32355176, PubMed:38316879). Component of the DCX(DET1-COP1) complex with the substrate recognition component DET1 and COP1 (PubMed:14739464). Component of the DCX(DDB2) complex with the substrate recognition component DDB2 (PubMed:15811626, PubMed:16678110). Component of the DCX(DTL) complex with the putative substrate recognition component DTL (PubMed:14578910, PubMed:15448697, PubMed:15548678). Component of DCX complexes part of the DesCEND (destruction via C-end degrons) pathway, which contain either TRPC4AP or DCAF12 as substrate-recognition component (PubMed:29779948). Component of the DCX(AMBRA1) complex with the substrate recognition component AMBRA1 (PubMed:30166453, PubMed:33854232, PubMed:33854239). Interacts with DDB1, RBX1, RNF7, CDT1, TIP120A/CAND1, SKP2, CDKN1B, MDM2, TP53 and HOXA9 (PubMed:10230407, PubMed:12609982, PubMed:14609952, PubMed:16482215, PubMed:16537899, PubMed:16678110, PubMed:16964240, PubMed:22118460). Interacts with DDB2; the interactions with DDB2 and CAND1 are mutually exclusive (PubMed:16482215, PubMed:16678110, PubMed:22118460). Interacts with DCAF1, DTL, DDA1, DCAF6, DCAF4, DCAF16, DCAF17, DET1, WDTC1, DCAF5, DCAF11, WDR24A, COP1, PAFAH1B1, ERCC8, GRWD1, FBXW5, RBBP7, GNB2, WSB1, WSB2, NUP43, PWP1, FBXW8, ATG16L1, KATNB1, RBBP4, RBBP5, LRWD1 and DCAF8 (PubMed:16949367, PubMed:17079684, PubMed:22935713). May interact with WDR26, WDR51B, SNRNP40, WDR61, WDR76, WDR5 (PubMed:17041588). Interacts (when neddylated) with ARIH1; leading to activate the E3 ligase activity of ARIH1 (PubMed:24076655). The DDB1-CUL4A complex interacts with CRY1 (PubMed:26431207). Interacts (unneddylated form) with DCUN1D1, DCUN1D2, DCUN1D3, DCUN1D4 and DCUN1D5; these interactions promote the cullin neddylation (PubMed:23201271, PubMed:26906416).</text>
</comment>
<comment type="subunit">
    <text evidence="21">(Microbial infection) Interacts with Epstein-Barr virus BPLF1.</text>
</comment>
<comment type="interaction">
    <interactant intactId="EBI-456106">
        <id>Q13619</id>
    </interactant>
    <interactant intactId="EBI-930964">
        <id>P54253</id>
        <label>ATXN1</label>
    </interactant>
    <organismsDiffer>false</organismsDiffer>
    <experiments>6</experiments>
</comment>
<comment type="interaction">
    <interactant intactId="EBI-456106">
        <id>Q13619</id>
    </interactant>
    <interactant intactId="EBI-456077">
        <id>Q86VP6</id>
        <label>CAND1</label>
    </interactant>
    <organismsDiffer>false</organismsDiffer>
    <experiments>6</experiments>
</comment>
<comment type="interaction">
    <interactant intactId="EBI-456106">
        <id>Q13619</id>
    </interactant>
    <interactant intactId="EBI-350322">
        <id>Q16531</id>
        <label>DDB1</label>
    </interactant>
    <organismsDiffer>false</organismsDiffer>
    <experiments>16</experiments>
</comment>
<comment type="interaction">
    <interactant intactId="EBI-456106">
        <id>Q13619</id>
    </interactant>
    <interactant intactId="EBI-1176171">
        <id>Q92466</id>
        <label>DDB2</label>
    </interactant>
    <organismsDiffer>false</organismsDiffer>
    <experiments>12</experiments>
</comment>
<comment type="interaction">
    <interactant intactId="EBI-456106">
        <id>Q13619</id>
    </interactant>
    <interactant intactId="EBI-352572">
        <id>P08238</id>
        <label>HSP90AB1</label>
    </interactant>
    <organismsDiffer>false</organismsDiffer>
    <experiments>2</experiments>
</comment>
<comment type="interaction">
    <interactant intactId="EBI-456106">
        <id>Q13619</id>
    </interactant>
    <interactant intactId="EBI-1993627">
        <id>O94888</id>
        <label>UBXN7</label>
    </interactant>
    <organismsDiffer>false</organismsDiffer>
    <experiments>7</experiments>
</comment>
<comment type="interaction">
    <interactant intactId="EBI-456106">
        <id>Q13619</id>
    </interactant>
    <interactant intactId="EBI-355164">
        <id>P55072</id>
        <label>VCP</label>
    </interactant>
    <organismsDiffer>false</organismsDiffer>
    <experiments>2</experiments>
</comment>
<comment type="alternative products">
    <event type="alternative splicing"/>
    <isoform>
        <id>Q13619-1</id>
        <name>1</name>
        <sequence type="displayed"/>
    </isoform>
    <isoform>
        <id>Q13619-2</id>
        <name>2</name>
        <sequence type="described" ref="VSP_018577"/>
    </isoform>
</comment>
<comment type="PTM">
    <text evidence="4 26 36 37">Neddylated; required for activity of cullin-RING-based E3 ubiquitin-protein ligase complexes (PubMed:10597293, PubMed:24076655, PubMed:38316879, PubMed:9694792). Deneddylated via its interaction with the COP9 signalosome (CSN) complex (PubMed:10597293, PubMed:24076655, PubMed:9694792).</text>
</comment>
<comment type="PTM">
    <text evidence="21">(Microbial infection) Deneddylated by Epstein-Barr virus BPLF1 leading to a S-phase-like environment that is required for efficient replication of the viral genome.</text>
</comment>
<comment type="similarity">
    <text evidence="2">Belongs to the cullin family.</text>
</comment>
<accession>Q13619</accession>
<accession>A2A2W2</accession>
<accession>O75834</accession>
<accession>Q589T6</accession>
<accession>Q5TC62</accession>
<accession>Q6UP08</accession>
<accession>Q9UP17</accession>
<feature type="chain" id="PRO_0000119795" description="Cullin-4A">
    <location>
        <begin position="1"/>
        <end position="759"/>
    </location>
</feature>
<feature type="domain" description="Cullin neddylation" evidence="1">
    <location>
        <begin position="691"/>
        <end position="751"/>
    </location>
</feature>
<feature type="modified residue" description="Phosphoserine" evidence="43 44 45 46">
    <location>
        <position position="10"/>
    </location>
</feature>
<feature type="cross-link" description="Glycyl lysine isopeptide (Lys-Gly) (interchain with G-Cter in SUMO2)" evidence="47">
    <location>
        <position position="8"/>
    </location>
</feature>
<feature type="cross-link" description="Glycyl lysine isopeptide (Lys-Gly) (interchain with G-Cter in ubiquitin)">
    <location>
        <position position="33"/>
    </location>
</feature>
<feature type="cross-link" description="Glycyl lysine isopeptide (Lys-Gly) (interchain with G-Cter in NEDD8)" evidence="36">
    <location>
        <position position="705"/>
    </location>
</feature>
<feature type="splice variant" id="VSP_018577" description="In isoform 2." evidence="38">
    <location>
        <begin position="1"/>
        <end position="100"/>
    </location>
</feature>
<feature type="sequence variant" id="VAR_020341" description="In dbSNP:rs2302757.">
    <original>K</original>
    <variation>R</variation>
    <location>
        <position position="644"/>
    </location>
</feature>
<feature type="mutagenesis site" description="Largely reduces interaction with DDB1; abolishes interaction with DDB2." evidence="13 19">
    <original>LYQAV</original>
    <variation>AAAAA</variation>
    <location>
        <begin position="86"/>
        <end position="90"/>
    </location>
</feature>
<feature type="mutagenesis site" description="Largely reduces interaction with DDB1; abolishes interaction with DDB2." evidence="13 19">
    <original>WQDH</original>
    <variation>AADA</variation>
    <location>
        <begin position="139"/>
        <end position="142"/>
    </location>
</feature>
<feature type="sequence conflict" description="In Ref. 3; BAD93235." evidence="39" ref="3">
    <original>S</original>
    <variation>T</variation>
    <location>
        <position position="281"/>
    </location>
</feature>
<feature type="sequence conflict" description="In Ref. 3; BAD93235." evidence="39" ref="3">
    <original>K</original>
    <variation>R</variation>
    <location>
        <position position="496"/>
    </location>
</feature>
<feature type="helix" evidence="49">
    <location>
        <begin position="56"/>
        <end position="73"/>
    </location>
</feature>
<feature type="helix" evidence="49">
    <location>
        <begin position="74"/>
        <end position="76"/>
    </location>
</feature>
<feature type="helix" evidence="49">
    <location>
        <begin position="84"/>
        <end position="92"/>
    </location>
</feature>
<feature type="turn" evidence="49">
    <location>
        <begin position="96"/>
        <end position="98"/>
    </location>
</feature>
<feature type="helix" evidence="49">
    <location>
        <begin position="99"/>
        <end position="116"/>
    </location>
</feature>
<feature type="helix" evidence="49">
    <location>
        <begin position="119"/>
        <end position="121"/>
    </location>
</feature>
<feature type="strand" evidence="49">
    <location>
        <begin position="128"/>
        <end position="130"/>
    </location>
</feature>
<feature type="helix" evidence="49">
    <location>
        <begin position="131"/>
        <end position="150"/>
    </location>
</feature>
<feature type="turn" evidence="49">
    <location>
        <begin position="151"/>
        <end position="153"/>
    </location>
</feature>
<feature type="helix" evidence="49">
    <location>
        <begin position="154"/>
        <end position="157"/>
    </location>
</feature>
<feature type="turn" evidence="49">
    <location>
        <begin position="158"/>
        <end position="161"/>
    </location>
</feature>
<feature type="strand" evidence="49">
    <location>
        <begin position="162"/>
        <end position="164"/>
    </location>
</feature>
<feature type="strand" evidence="48">
    <location>
        <begin position="165"/>
        <end position="167"/>
    </location>
</feature>
<feature type="helix" evidence="49">
    <location>
        <begin position="170"/>
        <end position="181"/>
    </location>
</feature>
<feature type="turn" evidence="49">
    <location>
        <begin position="182"/>
        <end position="185"/>
    </location>
</feature>
<feature type="helix" evidence="49">
    <location>
        <begin position="187"/>
        <end position="203"/>
    </location>
</feature>
<feature type="helix" evidence="49">
    <location>
        <begin position="211"/>
        <end position="223"/>
    </location>
</feature>
<feature type="turn" evidence="49">
    <location>
        <begin position="224"/>
        <end position="228"/>
    </location>
</feature>
<feature type="strand" evidence="49">
    <location>
        <begin position="229"/>
        <end position="231"/>
    </location>
</feature>
<feature type="helix" evidence="49">
    <location>
        <begin position="232"/>
        <end position="253"/>
    </location>
</feature>
<feature type="helix" evidence="49">
    <location>
        <begin position="256"/>
        <end position="276"/>
    </location>
</feature>
<feature type="helix" evidence="49">
    <location>
        <begin position="280"/>
        <end position="294"/>
    </location>
</feature>
<feature type="turn" evidence="49">
    <location>
        <begin position="295"/>
        <end position="297"/>
    </location>
</feature>
<feature type="turn" evidence="49">
    <location>
        <begin position="301"/>
        <end position="303"/>
    </location>
</feature>
<feature type="helix" evidence="49">
    <location>
        <begin position="305"/>
        <end position="312"/>
    </location>
</feature>
<feature type="helix" evidence="49">
    <location>
        <begin position="316"/>
        <end position="325"/>
    </location>
</feature>
<feature type="strand" evidence="49">
    <location>
        <begin position="328"/>
        <end position="331"/>
    </location>
</feature>
<feature type="helix" evidence="49">
    <location>
        <begin position="332"/>
        <end position="352"/>
    </location>
</feature>
<feature type="helix" evidence="48">
    <location>
        <begin position="355"/>
        <end position="357"/>
    </location>
</feature>
<feature type="strand" evidence="49">
    <location>
        <begin position="359"/>
        <end position="361"/>
    </location>
</feature>
<feature type="helix" evidence="49">
    <location>
        <begin position="362"/>
        <end position="377"/>
    </location>
</feature>
<feature type="turn" evidence="48">
    <location>
        <begin position="378"/>
        <end position="382"/>
    </location>
</feature>
<feature type="helix" evidence="49">
    <location>
        <begin position="385"/>
        <end position="398"/>
    </location>
</feature>
<feature type="helix" evidence="49">
    <location>
        <begin position="405"/>
        <end position="416"/>
    </location>
</feature>
<feature type="helix" evidence="48">
    <location>
        <begin position="421"/>
        <end position="423"/>
    </location>
</feature>
<feature type="helix" evidence="49">
    <location>
        <begin position="426"/>
        <end position="440"/>
    </location>
</feature>
<feature type="helix" evidence="49">
    <location>
        <begin position="446"/>
        <end position="461"/>
    </location>
</feature>
<feature type="strand" evidence="49">
    <location>
        <begin position="462"/>
        <end position="464"/>
    </location>
</feature>
<feature type="helix" evidence="49">
    <location>
        <begin position="469"/>
        <end position="480"/>
    </location>
</feature>
<feature type="turn" evidence="48">
    <location>
        <begin position="481"/>
        <end position="483"/>
    </location>
</feature>
<feature type="strand" evidence="49">
    <location>
        <begin position="487"/>
        <end position="489"/>
    </location>
</feature>
<feature type="helix" evidence="49">
    <location>
        <begin position="490"/>
        <end position="511"/>
    </location>
</feature>
<feature type="turn" evidence="49">
    <location>
        <begin position="512"/>
        <end position="516"/>
    </location>
</feature>
<feature type="strand" evidence="48">
    <location>
        <begin position="522"/>
        <end position="529"/>
    </location>
</feature>
<feature type="turn" evidence="48">
    <location>
        <begin position="530"/>
        <end position="532"/>
    </location>
</feature>
<feature type="helix" evidence="49">
    <location>
        <begin position="545"/>
        <end position="559"/>
    </location>
</feature>
<feature type="strand" evidence="49">
    <location>
        <begin position="560"/>
        <end position="563"/>
    </location>
</feature>
<feature type="strand" evidence="49">
    <location>
        <begin position="566"/>
        <end position="568"/>
    </location>
</feature>
<feature type="helix" evidence="48">
    <location>
        <begin position="571"/>
        <end position="573"/>
    </location>
</feature>
<feature type="strand" evidence="49">
    <location>
        <begin position="575"/>
        <end position="580"/>
    </location>
</feature>
<feature type="strand" evidence="49">
    <location>
        <begin position="587"/>
        <end position="592"/>
    </location>
</feature>
<feature type="helix" evidence="49">
    <location>
        <begin position="593"/>
        <end position="604"/>
    </location>
</feature>
<feature type="helix" evidence="49">
    <location>
        <begin position="610"/>
        <end position="615"/>
    </location>
</feature>
<feature type="helix" evidence="49">
    <location>
        <begin position="621"/>
        <end position="627"/>
    </location>
</feature>
<feature type="strand" evidence="49">
    <location>
        <begin position="630"/>
        <end position="634"/>
    </location>
</feature>
<feature type="strand" evidence="49">
    <location>
        <begin position="637"/>
        <end position="639"/>
    </location>
</feature>
<feature type="strand" evidence="48">
    <location>
        <begin position="645"/>
        <end position="647"/>
    </location>
</feature>
<feature type="strand" evidence="48">
    <location>
        <begin position="653"/>
        <end position="656"/>
    </location>
</feature>
<feature type="strand" evidence="49">
    <location>
        <begin position="665"/>
        <end position="667"/>
    </location>
</feature>
<feature type="helix" evidence="49">
    <location>
        <begin position="672"/>
        <end position="674"/>
    </location>
</feature>
<feature type="helix" evidence="49">
    <location>
        <begin position="678"/>
        <end position="689"/>
    </location>
</feature>
<feature type="helix" evidence="49">
    <location>
        <begin position="692"/>
        <end position="706"/>
    </location>
</feature>
<feature type="strand" evidence="48">
    <location>
        <begin position="707"/>
        <end position="711"/>
    </location>
</feature>
<feature type="helix" evidence="49">
    <location>
        <begin position="712"/>
        <end position="722"/>
    </location>
</feature>
<feature type="strand" evidence="48">
    <location>
        <begin position="723"/>
        <end position="725"/>
    </location>
</feature>
<feature type="helix" evidence="49">
    <location>
        <begin position="729"/>
        <end position="741"/>
    </location>
</feature>
<feature type="strand" evidence="49">
    <location>
        <begin position="746"/>
        <end position="748"/>
    </location>
</feature>
<feature type="strand" evidence="49">
    <location>
        <begin position="754"/>
        <end position="757"/>
    </location>
</feature>
<dbReference type="EMBL" id="AF077188">
    <property type="protein sequence ID" value="AAD45191.1"/>
    <property type="molecule type" value="mRNA"/>
</dbReference>
<dbReference type="EMBL" id="AY365124">
    <property type="protein sequence ID" value="AAR13072.1"/>
    <property type="molecule type" value="mRNA"/>
</dbReference>
<dbReference type="EMBL" id="AB178950">
    <property type="protein sequence ID" value="BAD93235.1"/>
    <property type="molecule type" value="mRNA"/>
</dbReference>
<dbReference type="EMBL" id="AL136221">
    <property type="status" value="NOT_ANNOTATED_CDS"/>
    <property type="molecule type" value="Genomic_DNA"/>
</dbReference>
<dbReference type="EMBL" id="BC008308">
    <property type="protein sequence ID" value="AAH08308.2"/>
    <property type="molecule type" value="mRNA"/>
</dbReference>
<dbReference type="EMBL" id="AB012193">
    <property type="protein sequence ID" value="BAA33146.1"/>
    <property type="molecule type" value="mRNA"/>
</dbReference>
<dbReference type="EMBL" id="U58090">
    <property type="protein sequence ID" value="AAC50547.2"/>
    <property type="molecule type" value="mRNA"/>
</dbReference>
<dbReference type="CCDS" id="CCDS41908.1">
    <molecule id="Q13619-1"/>
</dbReference>
<dbReference type="CCDS" id="CCDS9533.1">
    <molecule id="Q13619-2"/>
</dbReference>
<dbReference type="RefSeq" id="NP_001008895.1">
    <molecule id="Q13619-1"/>
    <property type="nucleotide sequence ID" value="NM_001008895.4"/>
</dbReference>
<dbReference type="RefSeq" id="NP_001265442.1">
    <molecule id="Q13619-2"/>
    <property type="nucleotide sequence ID" value="NM_001278513.3"/>
</dbReference>
<dbReference type="RefSeq" id="NP_001341867.1">
    <molecule id="Q13619-2"/>
    <property type="nucleotide sequence ID" value="NM_001354938.2"/>
</dbReference>
<dbReference type="RefSeq" id="NP_001341868.1">
    <molecule id="Q13619-2"/>
    <property type="nucleotide sequence ID" value="NM_001354939.2"/>
</dbReference>
<dbReference type="RefSeq" id="NP_001341869.1">
    <molecule id="Q13619-2"/>
    <property type="nucleotide sequence ID" value="NM_001354940.2"/>
</dbReference>
<dbReference type="RefSeq" id="NP_003580.1">
    <molecule id="Q13619-2"/>
    <property type="nucleotide sequence ID" value="NM_003589.4"/>
</dbReference>
<dbReference type="RefSeq" id="XP_011535825.1">
    <property type="nucleotide sequence ID" value="XM_011537523.2"/>
</dbReference>
<dbReference type="PDB" id="2HYE">
    <property type="method" value="X-ray"/>
    <property type="resolution" value="3.10 A"/>
    <property type="chains" value="C=1-759"/>
</dbReference>
<dbReference type="PDB" id="4A0K">
    <property type="method" value="X-ray"/>
    <property type="resolution" value="5.93 A"/>
    <property type="chains" value="A=38-759"/>
</dbReference>
<dbReference type="PDB" id="7OKQ">
    <property type="method" value="EM"/>
    <property type="resolution" value="8.40 A"/>
    <property type="chains" value="C/G/K/O=35-759"/>
</dbReference>
<dbReference type="PDB" id="7OPC">
    <property type="method" value="EM"/>
    <property type="resolution" value="3.00 A"/>
    <property type="chains" value="e=1-759"/>
</dbReference>
<dbReference type="PDB" id="7OPD">
    <property type="method" value="EM"/>
    <property type="resolution" value="3.00 A"/>
    <property type="chains" value="e=1-759"/>
</dbReference>
<dbReference type="PDB" id="8B3G">
    <property type="method" value="EM"/>
    <property type="resolution" value="4.40 A"/>
    <property type="chains" value="e=1-759"/>
</dbReference>
<dbReference type="PDB" id="8B3I">
    <property type="method" value="EM"/>
    <property type="resolution" value="3.50 A"/>
    <property type="chains" value="e=1-759"/>
</dbReference>
<dbReference type="PDBsum" id="2HYE"/>
<dbReference type="PDBsum" id="4A0K"/>
<dbReference type="PDBsum" id="7OKQ"/>
<dbReference type="PDBsum" id="7OPC"/>
<dbReference type="PDBsum" id="7OPD"/>
<dbReference type="PDBsum" id="8B3G"/>
<dbReference type="PDBsum" id="8B3I"/>
<dbReference type="EMDB" id="EMD-12964"/>
<dbReference type="EMDB" id="EMD-12965"/>
<dbReference type="EMDB" id="EMD-13015"/>
<dbReference type="EMDB" id="EMD-13016"/>
<dbReference type="EMDB" id="EMD-15827"/>
<dbReference type="EMDB" id="EMD-15829"/>
<dbReference type="EMDB" id="EMD-3313"/>
<dbReference type="EMDB" id="EMD-3314"/>
<dbReference type="EMDB" id="EMD-3315"/>
<dbReference type="EMDB" id="EMD-3316"/>
<dbReference type="EMDB" id="EMD-50292"/>
<dbReference type="EMDB" id="EMD-50295"/>
<dbReference type="SMR" id="Q13619"/>
<dbReference type="BioGRID" id="114029">
    <property type="interactions" value="866"/>
</dbReference>
<dbReference type="ComplexPortal" id="CPX-2399">
    <property type="entry name" value="CRL4-DCAF13 E3 ubiquitin ligase complex, CUL4A variant"/>
</dbReference>
<dbReference type="ComplexPortal" id="CPX-2403">
    <property type="entry name" value="CRL4-DCAF11 E3 ubiquitin ligase complex, CUL4A variant"/>
</dbReference>
<dbReference type="ComplexPortal" id="CPX-2405">
    <property type="entry name" value="CRL4-DCAF12 E3 ubiquitin ligase complex, CUL4A variant"/>
</dbReference>
<dbReference type="ComplexPortal" id="CPX-2411">
    <property type="entry name" value="CRL4-DCAF14 E3 ubiquitin ligase complex, CUL4A variant"/>
</dbReference>
<dbReference type="ComplexPortal" id="CPX-2413">
    <property type="entry name" value="CRL4-DCAF16 E3 ubiquitin ligase complex, CUL4A variant"/>
</dbReference>
<dbReference type="ComplexPortal" id="CPX-2415">
    <property type="entry name" value="CRL4-DCAF17 E3 ubiquitin ligase complex, CUL4A variant"/>
</dbReference>
<dbReference type="ComplexPortal" id="CPX-2757">
    <property type="entry name" value="CRL4-ERCC8 E3 ubiquitin ligase complex, CUL4A variant"/>
</dbReference>
<dbReference type="ComplexPortal" id="CPX-2759">
    <property type="entry name" value="CRL4-CRBN E3 ubiquitin ligase complex, CUL4A variant"/>
</dbReference>
<dbReference type="ComplexPortal" id="CPX-2766">
    <property type="entry name" value="CRL4-DCAF15 E3 ubiquitin ligase complex, CUL4A variant"/>
</dbReference>
<dbReference type="ComplexPortal" id="CPX-2769">
    <property type="entry name" value="CRL4-DCAF1 E3 ubiquitin ligase complex, CUL4A variant"/>
</dbReference>
<dbReference type="ComplexPortal" id="CPX-2782">
    <property type="entry name" value="CRL4-DCAF5 E3 ubiquitin ligase complex, CUL4A variant"/>
</dbReference>
<dbReference type="ComplexPortal" id="CPX-2784">
    <property type="entry name" value="CRL4-DCAF6 E3 ubiquitin ligase complex, CUL4A variant"/>
</dbReference>
<dbReference type="ComplexPortal" id="CPX-2785">
    <property type="entry name" value="CRL4-DCAF7 E3 ubiquitin ligase complex, CUL4A variant"/>
</dbReference>
<dbReference type="ComplexPortal" id="CPX-2787">
    <property type="entry name" value="CRL4-DCAF9 E3 ubiquitin ligase complex, CUL4A variant"/>
</dbReference>
<dbReference type="ComplexPortal" id="CPX-2795">
    <property type="entry name" value="CRL4-CDT2 E3 ubiquitin ligase complex, CUL4A variant"/>
</dbReference>
<dbReference type="ComplexPortal" id="CPX-2797">
    <property type="entry name" value="CRL4-AMBRA1 E3 ubiquitin ligase complex, CUL4A variant"/>
</dbReference>
<dbReference type="ComplexPortal" id="CPX-2799">
    <property type="entry name" value="CRL4-DCAF4 E3 ubiquitin ligase complex, CUL4A variant"/>
</dbReference>
<dbReference type="ComplexPortal" id="CPX-2817">
    <property type="entry name" value="CRL4-DCAF10 E3 ubiquitin ligase complex, CUL4A variant"/>
</dbReference>
<dbReference type="ComplexPortal" id="CPX-2818">
    <property type="entry name" value="CRL4-DCAF8 E3 ubiquitin ligase complex, CUL4A variant"/>
</dbReference>
<dbReference type="ComplexPortal" id="CPX-477">
    <property type="entry name" value="CRL4-DDB2 E3 ubiquitin ligase complex, CUL4A variant"/>
</dbReference>
<dbReference type="CORUM" id="Q13619"/>
<dbReference type="DIP" id="DIP-31610N"/>
<dbReference type="FunCoup" id="Q13619">
    <property type="interactions" value="2218"/>
</dbReference>
<dbReference type="IntAct" id="Q13619">
    <property type="interactions" value="324"/>
</dbReference>
<dbReference type="MINT" id="Q13619"/>
<dbReference type="STRING" id="9606.ENSP00000364589"/>
<dbReference type="BindingDB" id="Q13619"/>
<dbReference type="ChEMBL" id="CHEMBL4523598"/>
<dbReference type="GlyCosmos" id="Q13619">
    <property type="glycosylation" value="1 site, 1 glycan"/>
</dbReference>
<dbReference type="GlyGen" id="Q13619">
    <property type="glycosylation" value="1 site, 1 O-linked glycan (1 site)"/>
</dbReference>
<dbReference type="iPTMnet" id="Q13619"/>
<dbReference type="MetOSite" id="Q13619"/>
<dbReference type="PhosphoSitePlus" id="Q13619"/>
<dbReference type="SwissPalm" id="Q13619"/>
<dbReference type="BioMuta" id="CUL4A"/>
<dbReference type="DMDM" id="108936013"/>
<dbReference type="jPOST" id="Q13619"/>
<dbReference type="MassIVE" id="Q13619"/>
<dbReference type="PaxDb" id="9606-ENSP00000364589"/>
<dbReference type="PeptideAtlas" id="Q13619"/>
<dbReference type="ProteomicsDB" id="59609">
    <molecule id="Q13619-1"/>
</dbReference>
<dbReference type="ProteomicsDB" id="59610">
    <molecule id="Q13619-2"/>
</dbReference>
<dbReference type="Pumba" id="Q13619"/>
<dbReference type="Antibodypedia" id="11756">
    <property type="antibodies" value="395 antibodies from 39 providers"/>
</dbReference>
<dbReference type="DNASU" id="8451"/>
<dbReference type="Ensembl" id="ENST00000375440.9">
    <molecule id="Q13619-1"/>
    <property type="protein sequence ID" value="ENSP00000364589.4"/>
    <property type="gene ID" value="ENSG00000139842.15"/>
</dbReference>
<dbReference type="Ensembl" id="ENST00000375441.7">
    <molecule id="Q13619-2"/>
    <property type="protein sequence ID" value="ENSP00000364590.3"/>
    <property type="gene ID" value="ENSG00000139842.15"/>
</dbReference>
<dbReference type="Ensembl" id="ENST00000451881.5">
    <molecule id="Q13619-2"/>
    <property type="protein sequence ID" value="ENSP00000389118.1"/>
    <property type="gene ID" value="ENSG00000139842.15"/>
</dbReference>
<dbReference type="Ensembl" id="ENST00000617546.4">
    <molecule id="Q13619-2"/>
    <property type="protein sequence ID" value="ENSP00000481782.1"/>
    <property type="gene ID" value="ENSG00000139842.15"/>
</dbReference>
<dbReference type="GeneID" id="8451"/>
<dbReference type="KEGG" id="hsa:8451"/>
<dbReference type="MANE-Select" id="ENST00000375440.9">
    <property type="protein sequence ID" value="ENSP00000364589.4"/>
    <property type="RefSeq nucleotide sequence ID" value="NM_001008895.4"/>
    <property type="RefSeq protein sequence ID" value="NP_001008895.1"/>
</dbReference>
<dbReference type="UCSC" id="uc021rmu.2">
    <molecule id="Q13619-1"/>
    <property type="organism name" value="human"/>
</dbReference>
<dbReference type="AGR" id="HGNC:2554"/>
<dbReference type="CTD" id="8451"/>
<dbReference type="DisGeNET" id="8451"/>
<dbReference type="GeneCards" id="CUL4A"/>
<dbReference type="HGNC" id="HGNC:2554">
    <property type="gene designation" value="CUL4A"/>
</dbReference>
<dbReference type="HPA" id="ENSG00000139842">
    <property type="expression patterns" value="Tissue enhanced (skeletal)"/>
</dbReference>
<dbReference type="MalaCards" id="CUL4A"/>
<dbReference type="MIM" id="603137">
    <property type="type" value="gene"/>
</dbReference>
<dbReference type="neXtProt" id="NX_Q13619"/>
<dbReference type="OpenTargets" id="ENSG00000139842"/>
<dbReference type="PharmGKB" id="PA27050"/>
<dbReference type="VEuPathDB" id="HostDB:ENSG00000139842"/>
<dbReference type="eggNOG" id="KOG2167">
    <property type="taxonomic scope" value="Eukaryota"/>
</dbReference>
<dbReference type="GeneTree" id="ENSGT00940000156905"/>
<dbReference type="HOGENOM" id="CLU_004747_7_2_1"/>
<dbReference type="InParanoid" id="Q13619"/>
<dbReference type="OMA" id="KCINLMK"/>
<dbReference type="OrthoDB" id="27073at2759"/>
<dbReference type="PAN-GO" id="Q13619">
    <property type="GO annotations" value="6 GO annotations based on evolutionary models"/>
</dbReference>
<dbReference type="PhylomeDB" id="Q13619"/>
<dbReference type="TreeFam" id="TF101153"/>
<dbReference type="PathwayCommons" id="Q13619"/>
<dbReference type="Reactome" id="R-HSA-110314">
    <property type="pathway name" value="Recognition of DNA damage by PCNA-containing replication complex"/>
</dbReference>
<dbReference type="Reactome" id="R-HSA-5696394">
    <property type="pathway name" value="DNA Damage Recognition in GG-NER"/>
</dbReference>
<dbReference type="Reactome" id="R-HSA-5696395">
    <property type="pathway name" value="Formation of Incision Complex in GG-NER"/>
</dbReference>
<dbReference type="Reactome" id="R-HSA-5696400">
    <property type="pathway name" value="Dual Incision in GG-NER"/>
</dbReference>
<dbReference type="Reactome" id="R-HSA-6781823">
    <property type="pathway name" value="Formation of TC-NER Pre-Incision Complex"/>
</dbReference>
<dbReference type="Reactome" id="R-HSA-6781827">
    <property type="pathway name" value="Transcription-Coupled Nucleotide Excision Repair (TC-NER)"/>
</dbReference>
<dbReference type="Reactome" id="R-HSA-6782135">
    <property type="pathway name" value="Dual incision in TC-NER"/>
</dbReference>
<dbReference type="Reactome" id="R-HSA-6782210">
    <property type="pathway name" value="Gap-filling DNA repair synthesis and ligation in TC-NER"/>
</dbReference>
<dbReference type="Reactome" id="R-HSA-8951664">
    <property type="pathway name" value="Neddylation"/>
</dbReference>
<dbReference type="SignaLink" id="Q13619"/>
<dbReference type="SIGNOR" id="Q13619"/>
<dbReference type="UniPathway" id="UPA00143"/>
<dbReference type="BioGRID-ORCS" id="8451">
    <property type="hits" value="23 hits in 1205 CRISPR screens"/>
</dbReference>
<dbReference type="ChiTaRS" id="CUL4A">
    <property type="organism name" value="human"/>
</dbReference>
<dbReference type="EvolutionaryTrace" id="Q13619"/>
<dbReference type="GeneWiki" id="CUL4A"/>
<dbReference type="GenomeRNAi" id="8451"/>
<dbReference type="Pharos" id="Q13619">
    <property type="development level" value="Tchem"/>
</dbReference>
<dbReference type="PRO" id="PR:Q13619"/>
<dbReference type="Proteomes" id="UP000005640">
    <property type="component" value="Chromosome 13"/>
</dbReference>
<dbReference type="RNAct" id="Q13619">
    <property type="molecule type" value="protein"/>
</dbReference>
<dbReference type="Bgee" id="ENSG00000139842">
    <property type="expression patterns" value="Expressed in gastrocnemius and 204 other cell types or tissues"/>
</dbReference>
<dbReference type="ExpressionAtlas" id="Q13619">
    <property type="expression patterns" value="baseline and differential"/>
</dbReference>
<dbReference type="GO" id="GO:0080008">
    <property type="term" value="C:Cul4-RING E3 ubiquitin ligase complex"/>
    <property type="evidence" value="ECO:0000314"/>
    <property type="project" value="UniProtKB"/>
</dbReference>
<dbReference type="GO" id="GO:0031464">
    <property type="term" value="C:Cul4A-RING E3 ubiquitin ligase complex"/>
    <property type="evidence" value="ECO:0000314"/>
    <property type="project" value="UniProtKB"/>
</dbReference>
<dbReference type="GO" id="GO:0005737">
    <property type="term" value="C:cytoplasm"/>
    <property type="evidence" value="ECO:0000314"/>
    <property type="project" value="UniProt"/>
</dbReference>
<dbReference type="GO" id="GO:0005654">
    <property type="term" value="C:nucleoplasm"/>
    <property type="evidence" value="ECO:0000304"/>
    <property type="project" value="Reactome"/>
</dbReference>
<dbReference type="GO" id="GO:0005634">
    <property type="term" value="C:nucleus"/>
    <property type="evidence" value="ECO:0000314"/>
    <property type="project" value="UniProt"/>
</dbReference>
<dbReference type="GO" id="GO:0160072">
    <property type="term" value="F:ubiquitin ligase complex scaffold activity"/>
    <property type="evidence" value="ECO:0000314"/>
    <property type="project" value="UniProt"/>
</dbReference>
<dbReference type="GO" id="GO:0061630">
    <property type="term" value="F:ubiquitin protein ligase activity"/>
    <property type="evidence" value="ECO:0000314"/>
    <property type="project" value="UniProt"/>
</dbReference>
<dbReference type="GO" id="GO:0031625">
    <property type="term" value="F:ubiquitin protein ligase binding"/>
    <property type="evidence" value="ECO:0000314"/>
    <property type="project" value="UniProt"/>
</dbReference>
<dbReference type="GO" id="GO:0008283">
    <property type="term" value="P:cell population proliferation"/>
    <property type="evidence" value="ECO:0007669"/>
    <property type="project" value="Ensembl"/>
</dbReference>
<dbReference type="GO" id="GO:0034644">
    <property type="term" value="P:cellular response to UV"/>
    <property type="evidence" value="ECO:0000269"/>
    <property type="project" value="ComplexPortal"/>
</dbReference>
<dbReference type="GO" id="GO:0006974">
    <property type="term" value="P:DNA damage response"/>
    <property type="evidence" value="ECO:0000269"/>
    <property type="project" value="ComplexPortal"/>
</dbReference>
<dbReference type="GO" id="GO:0006281">
    <property type="term" value="P:DNA repair"/>
    <property type="evidence" value="ECO:0007669"/>
    <property type="project" value="UniProtKB-KW"/>
</dbReference>
<dbReference type="GO" id="GO:0000082">
    <property type="term" value="P:G1/S transition of mitotic cell cycle"/>
    <property type="evidence" value="ECO:0000304"/>
    <property type="project" value="ProtInc"/>
</dbReference>
<dbReference type="GO" id="GO:0030097">
    <property type="term" value="P:hemopoiesis"/>
    <property type="evidence" value="ECO:0007669"/>
    <property type="project" value="Ensembl"/>
</dbReference>
<dbReference type="GO" id="GO:0001701">
    <property type="term" value="P:in utero embryonic development"/>
    <property type="evidence" value="ECO:0007669"/>
    <property type="project" value="Ensembl"/>
</dbReference>
<dbReference type="GO" id="GO:0097193">
    <property type="term" value="P:intrinsic apoptotic signaling pathway"/>
    <property type="evidence" value="ECO:0000304"/>
    <property type="project" value="ProtInc"/>
</dbReference>
<dbReference type="GO" id="GO:0030853">
    <property type="term" value="P:negative regulation of granulocyte differentiation"/>
    <property type="evidence" value="ECO:0007669"/>
    <property type="project" value="Ensembl"/>
</dbReference>
<dbReference type="GO" id="GO:0008284">
    <property type="term" value="P:positive regulation of cell population proliferation"/>
    <property type="evidence" value="ECO:0007669"/>
    <property type="project" value="Ensembl"/>
</dbReference>
<dbReference type="GO" id="GO:1900087">
    <property type="term" value="P:positive regulation of G1/S transition of mitotic cell cycle"/>
    <property type="evidence" value="ECO:0007669"/>
    <property type="project" value="Ensembl"/>
</dbReference>
<dbReference type="GO" id="GO:0045732">
    <property type="term" value="P:positive regulation of protein catabolic process"/>
    <property type="evidence" value="ECO:0000314"/>
    <property type="project" value="UniProt"/>
</dbReference>
<dbReference type="GO" id="GO:0043161">
    <property type="term" value="P:proteasome-mediated ubiquitin-dependent protein catabolic process"/>
    <property type="evidence" value="ECO:0000315"/>
    <property type="project" value="UniProtKB"/>
</dbReference>
<dbReference type="GO" id="GO:0016567">
    <property type="term" value="P:protein ubiquitination"/>
    <property type="evidence" value="ECO:0000314"/>
    <property type="project" value="UniProtKB"/>
</dbReference>
<dbReference type="GO" id="GO:2000001">
    <property type="term" value="P:regulation of DNA damage checkpoint"/>
    <property type="evidence" value="ECO:0007669"/>
    <property type="project" value="Ensembl"/>
</dbReference>
<dbReference type="GO" id="GO:2000819">
    <property type="term" value="P:regulation of nucleotide-excision repair"/>
    <property type="evidence" value="ECO:0007669"/>
    <property type="project" value="Ensembl"/>
</dbReference>
<dbReference type="GO" id="GO:0048511">
    <property type="term" value="P:rhythmic process"/>
    <property type="evidence" value="ECO:0007669"/>
    <property type="project" value="UniProtKB-KW"/>
</dbReference>
<dbReference type="GO" id="GO:0042254">
    <property type="term" value="P:ribosome biogenesis"/>
    <property type="evidence" value="ECO:0000315"/>
    <property type="project" value="UniProtKB"/>
</dbReference>
<dbReference type="GO" id="GO:0035019">
    <property type="term" value="P:somatic stem cell population maintenance"/>
    <property type="evidence" value="ECO:0007669"/>
    <property type="project" value="Ensembl"/>
</dbReference>
<dbReference type="GO" id="GO:0007283">
    <property type="term" value="P:spermatogenesis"/>
    <property type="evidence" value="ECO:0000314"/>
    <property type="project" value="UniProt"/>
</dbReference>
<dbReference type="GO" id="GO:0042110">
    <property type="term" value="P:T cell activation"/>
    <property type="evidence" value="ECO:0000314"/>
    <property type="project" value="UniProt"/>
</dbReference>
<dbReference type="GO" id="GO:0140627">
    <property type="term" value="P:ubiquitin-dependent protein catabolic process via the C-end degron rule pathway"/>
    <property type="evidence" value="ECO:0000314"/>
    <property type="project" value="UniProt"/>
</dbReference>
<dbReference type="FunFam" id="1.20.1310.10:FF:000003">
    <property type="entry name" value="Cullin 4A"/>
    <property type="match status" value="1"/>
</dbReference>
<dbReference type="FunFam" id="3.30.230.130:FF:000001">
    <property type="entry name" value="Cullin 4A"/>
    <property type="match status" value="1"/>
</dbReference>
<dbReference type="FunFam" id="1.10.10.10:FF:000050">
    <property type="entry name" value="Cullin 4B"/>
    <property type="match status" value="1"/>
</dbReference>
<dbReference type="FunFam" id="1.20.1310.10:FF:000004">
    <property type="entry name" value="Cullin 4B"/>
    <property type="match status" value="1"/>
</dbReference>
<dbReference type="FunFam" id="1.20.1310.10:FF:000008">
    <property type="entry name" value="Cullin 4B"/>
    <property type="match status" value="1"/>
</dbReference>
<dbReference type="FunFam" id="1.20.1310.10:FF:000010">
    <property type="entry name" value="Cullin 4B"/>
    <property type="match status" value="1"/>
</dbReference>
<dbReference type="Gene3D" id="1.20.1310.10">
    <property type="entry name" value="Cullin Repeats"/>
    <property type="match status" value="4"/>
</dbReference>
<dbReference type="Gene3D" id="3.30.230.130">
    <property type="entry name" value="Cullin, Chain C, Domain 2"/>
    <property type="match status" value="1"/>
</dbReference>
<dbReference type="Gene3D" id="1.10.10.10">
    <property type="entry name" value="Winged helix-like DNA-binding domain superfamily/Winged helix DNA-binding domain"/>
    <property type="match status" value="1"/>
</dbReference>
<dbReference type="IDEAL" id="IID00514"/>
<dbReference type="InterPro" id="IPR045093">
    <property type="entry name" value="Cullin"/>
</dbReference>
<dbReference type="InterPro" id="IPR016157">
    <property type="entry name" value="Cullin_CS"/>
</dbReference>
<dbReference type="InterPro" id="IPR016158">
    <property type="entry name" value="Cullin_homology"/>
</dbReference>
<dbReference type="InterPro" id="IPR036317">
    <property type="entry name" value="Cullin_homology_sf"/>
</dbReference>
<dbReference type="InterPro" id="IPR001373">
    <property type="entry name" value="Cullin_N"/>
</dbReference>
<dbReference type="InterPro" id="IPR019559">
    <property type="entry name" value="Cullin_neddylation_domain"/>
</dbReference>
<dbReference type="InterPro" id="IPR016159">
    <property type="entry name" value="Cullin_repeat-like_dom_sf"/>
</dbReference>
<dbReference type="InterPro" id="IPR036388">
    <property type="entry name" value="WH-like_DNA-bd_sf"/>
</dbReference>
<dbReference type="InterPro" id="IPR036390">
    <property type="entry name" value="WH_DNA-bd_sf"/>
</dbReference>
<dbReference type="PANTHER" id="PTHR11932">
    <property type="entry name" value="CULLIN"/>
    <property type="match status" value="1"/>
</dbReference>
<dbReference type="Pfam" id="PF00888">
    <property type="entry name" value="Cullin"/>
    <property type="match status" value="1"/>
</dbReference>
<dbReference type="Pfam" id="PF10557">
    <property type="entry name" value="Cullin_Nedd8"/>
    <property type="match status" value="1"/>
</dbReference>
<dbReference type="SMART" id="SM00182">
    <property type="entry name" value="CULLIN"/>
    <property type="match status" value="1"/>
</dbReference>
<dbReference type="SMART" id="SM00884">
    <property type="entry name" value="Cullin_Nedd8"/>
    <property type="match status" value="1"/>
</dbReference>
<dbReference type="SUPFAM" id="SSF75632">
    <property type="entry name" value="Cullin homology domain"/>
    <property type="match status" value="1"/>
</dbReference>
<dbReference type="SUPFAM" id="SSF74788">
    <property type="entry name" value="Cullin repeat-like"/>
    <property type="match status" value="1"/>
</dbReference>
<dbReference type="SUPFAM" id="SSF46785">
    <property type="entry name" value="Winged helix' DNA-binding domain"/>
    <property type="match status" value="1"/>
</dbReference>
<dbReference type="PROSITE" id="PS01256">
    <property type="entry name" value="CULLIN_1"/>
    <property type="match status" value="1"/>
</dbReference>
<dbReference type="PROSITE" id="PS50069">
    <property type="entry name" value="CULLIN_2"/>
    <property type="match status" value="1"/>
</dbReference>
<protein>
    <recommendedName>
        <fullName evidence="39">Cullin-4A</fullName>
        <shortName evidence="38">CUL-4A</shortName>
    </recommendedName>
</protein>
<organism>
    <name type="scientific">Homo sapiens</name>
    <name type="common">Human</name>
    <dbReference type="NCBI Taxonomy" id="9606"/>
    <lineage>
        <taxon>Eukaryota</taxon>
        <taxon>Metazoa</taxon>
        <taxon>Chordata</taxon>
        <taxon>Craniata</taxon>
        <taxon>Vertebrata</taxon>
        <taxon>Euteleostomi</taxon>
        <taxon>Mammalia</taxon>
        <taxon>Eutheria</taxon>
        <taxon>Euarchontoglires</taxon>
        <taxon>Primates</taxon>
        <taxon>Haplorrhini</taxon>
        <taxon>Catarrhini</taxon>
        <taxon>Hominidae</taxon>
        <taxon>Homo</taxon>
    </lineage>
</organism>
<keyword id="KW-0002">3D-structure</keyword>
<keyword id="KW-0025">Alternative splicing</keyword>
<keyword id="KW-0090">Biological rhythms</keyword>
<keyword id="KW-0227">DNA damage</keyword>
<keyword id="KW-0234">DNA repair</keyword>
<keyword id="KW-0945">Host-virus interaction</keyword>
<keyword id="KW-1017">Isopeptide bond</keyword>
<keyword id="KW-0597">Phosphoprotein</keyword>
<keyword id="KW-1267">Proteomics identification</keyword>
<keyword id="KW-1185">Reference proteome</keyword>
<keyword id="KW-0832">Ubl conjugation</keyword>
<keyword id="KW-0833">Ubl conjugation pathway</keyword>
<proteinExistence type="evidence at protein level"/>
<name>CUL4A_HUMAN</name>
<evidence type="ECO:0000255" key="1"/>
<evidence type="ECO:0000255" key="2">
    <source>
        <dbReference type="PROSITE-ProRule" id="PRU00330"/>
    </source>
</evidence>
<evidence type="ECO:0000269" key="3">
    <source>
    </source>
</evidence>
<evidence type="ECO:0000269" key="4">
    <source>
    </source>
</evidence>
<evidence type="ECO:0000269" key="5">
    <source>
    </source>
</evidence>
<evidence type="ECO:0000269" key="6">
    <source>
    </source>
</evidence>
<evidence type="ECO:0000269" key="7">
    <source>
    </source>
</evidence>
<evidence type="ECO:0000269" key="8">
    <source>
    </source>
</evidence>
<evidence type="ECO:0000269" key="9">
    <source>
    </source>
</evidence>
<evidence type="ECO:0000269" key="10">
    <source>
    </source>
</evidence>
<evidence type="ECO:0000269" key="11">
    <source>
    </source>
</evidence>
<evidence type="ECO:0000269" key="12">
    <source>
    </source>
</evidence>
<evidence type="ECO:0000269" key="13">
    <source>
    </source>
</evidence>
<evidence type="ECO:0000269" key="14">
    <source>
    </source>
</evidence>
<evidence type="ECO:0000269" key="15">
    <source>
    </source>
</evidence>
<evidence type="ECO:0000269" key="16">
    <source>
    </source>
</evidence>
<evidence type="ECO:0000269" key="17">
    <source>
    </source>
</evidence>
<evidence type="ECO:0000269" key="18">
    <source>
    </source>
</evidence>
<evidence type="ECO:0000269" key="19">
    <source>
    </source>
</evidence>
<evidence type="ECO:0000269" key="20">
    <source>
    </source>
</evidence>
<evidence type="ECO:0000269" key="21">
    <source>
    </source>
</evidence>
<evidence type="ECO:0000269" key="22">
    <source>
    </source>
</evidence>
<evidence type="ECO:0000269" key="23">
    <source>
    </source>
</evidence>
<evidence type="ECO:0000269" key="24">
    <source>
    </source>
</evidence>
<evidence type="ECO:0000269" key="25">
    <source>
    </source>
</evidence>
<evidence type="ECO:0000269" key="26">
    <source>
    </source>
</evidence>
<evidence type="ECO:0000269" key="27">
    <source>
    </source>
</evidence>
<evidence type="ECO:0000269" key="28">
    <source>
    </source>
</evidence>
<evidence type="ECO:0000269" key="29">
    <source>
    </source>
</evidence>
<evidence type="ECO:0000269" key="30">
    <source>
    </source>
</evidence>
<evidence type="ECO:0000269" key="31">
    <source>
    </source>
</evidence>
<evidence type="ECO:0000269" key="32">
    <source>
    </source>
</evidence>
<evidence type="ECO:0000269" key="33">
    <source>
    </source>
</evidence>
<evidence type="ECO:0000269" key="34">
    <source>
    </source>
</evidence>
<evidence type="ECO:0000269" key="35">
    <source>
    </source>
</evidence>
<evidence type="ECO:0000269" key="36">
    <source>
    </source>
</evidence>
<evidence type="ECO:0000269" key="37">
    <source>
    </source>
</evidence>
<evidence type="ECO:0000303" key="38">
    <source>
    </source>
</evidence>
<evidence type="ECO:0000305" key="39"/>
<evidence type="ECO:0000312" key="40">
    <source>
        <dbReference type="HGNC" id="HGNC:2554"/>
    </source>
</evidence>
<evidence type="ECO:0007744" key="41">
    <source>
        <dbReference type="PDB" id="8B3G"/>
    </source>
</evidence>
<evidence type="ECO:0007744" key="42">
    <source>
        <dbReference type="PDB" id="8B3I"/>
    </source>
</evidence>
<evidence type="ECO:0007744" key="43">
    <source>
    </source>
</evidence>
<evidence type="ECO:0007744" key="44">
    <source>
    </source>
</evidence>
<evidence type="ECO:0007744" key="45">
    <source>
    </source>
</evidence>
<evidence type="ECO:0007744" key="46">
    <source>
    </source>
</evidence>
<evidence type="ECO:0007744" key="47">
    <source>
    </source>
</evidence>
<evidence type="ECO:0007829" key="48">
    <source>
        <dbReference type="PDB" id="2HYE"/>
    </source>
</evidence>
<evidence type="ECO:0007829" key="49">
    <source>
        <dbReference type="PDB" id="7OPC"/>
    </source>
</evidence>
<sequence>MADEAPRKGSFSALVGRTNGLTKPAALAAAPAKPGGAGGSKKLVIKNFRDRPRLPDNYTQDTWRKLHEAVRAVQSSTSIRYNLEELYQAVENLCSHKVSPMLYKQLRQACEDHVQAQILPFREDSLDSVLFLKKINTCWQDHCRQMIMIRSIFLFLDRTYVLQNSTLPSIWDMGLELFRTHIISDKMVQSKTIDGILLLIERERSGEAVDRSLLRSLLGMLSDLQVYKDSFELKFLEETNCLYAAEGQRLMQEREVPEYLNHVSKRLEEEGDRVITYLDHSTQKPLIACVEKQLLGEHLTAILQKGLDHLLDENRVPDLAQMYQLFSRVRGGQQALLQHWSEYIKTFGTAIVINPEKDKDMVQDLLDFKDKVDHVIEVCFQKNERFVNLMKESFETFINKRPNKPAELIAKHVDSKLRAGNKEATDEELERTLDKIMILFRFIHGKDVFEAFYKKDLAKRLLVGKSASVDAEKSMLSKLKHECGAAFTSKLEGMFKDMELSKDIMVHFKQHMQNQSDSGPIDLTVNILTMGYWPTYTPMEVHLTPEMIKLQEVFKAFYLGKHSGRKLQWQTTLGHAVLKAEFKEGKKEFQVSLFQTLVLLMFNEGDGFSFEEIKMATGIEDSELRRTLQSLACGKARVLIKSPKGKEVEDGDKFIFNGEFKHKLFRIKINQIQMKETVEEQVSTTERVFQDRQYQIDAAIVRIMKMRKTLGHNLLVSELYNQLKFPVKPGDLKKRIESLIDRDYMERDKDNPNQYHYVA</sequence>
<reference key="1">
    <citation type="journal article" date="1998" name="Cancer Res.">
        <title>The human homologue for the Caenorhabditis elegans cul-4 gene is amplified and overexpressed in primary breast cancers.</title>
        <authorList>
            <person name="Chen L.-C."/>
            <person name="Manjeshwar S."/>
            <person name="Lu Y."/>
            <person name="Moore D."/>
            <person name="Ljung B.M."/>
            <person name="Kuo W.L."/>
            <person name="Dairkee S.H."/>
            <person name="Wernick M."/>
            <person name="Collins C."/>
            <person name="Smith H.S."/>
        </authorList>
    </citation>
    <scope>NUCLEOTIDE SEQUENCE [MRNA] (ISOFORM 2)</scope>
</reference>
<reference key="2">
    <citation type="journal article" date="2003" name="Nat. Cell Biol.">
        <title>Radiation-mediated proteolysis of CDT1 by CUL4-ROC1 and CSN complexes constitutes a new checkpoint.</title>
        <authorList>
            <person name="Higa L.A."/>
            <person name="Mihaylov I.S."/>
            <person name="Banks D.P."/>
            <person name="Zheng J."/>
            <person name="Zhang H."/>
        </authorList>
    </citation>
    <scope>NUCLEOTIDE SEQUENCE [MRNA] (ISOFORM 1)</scope>
    <scope>FUNCTION</scope>
    <scope>INTERACTION WITH CDT1</scope>
</reference>
<reference key="3">
    <citation type="journal article" date="2005" name="DNA Repair">
        <title>DDB2, the xeroderma pigmentosum group E gene product, is directly ubiquitylated by Cullin 4A-based ubiquitin ligase complex.</title>
        <authorList>
            <person name="Matsuda N."/>
            <person name="Azuma K."/>
            <person name="Saijo M."/>
            <person name="Iemura S."/>
            <person name="Hioki Y."/>
            <person name="Natsume T."/>
            <person name="Chiba T."/>
            <person name="Tanaka K."/>
            <person name="Tanaka K."/>
        </authorList>
    </citation>
    <scope>NUCLEOTIDE SEQUENCE [MRNA] (ISOFORM 1)</scope>
    <scope>FUNCTION</scope>
</reference>
<reference key="4">
    <citation type="journal article" date="2004" name="Nature">
        <title>The DNA sequence and analysis of human chromosome 13.</title>
        <authorList>
            <person name="Dunham A."/>
            <person name="Matthews L.H."/>
            <person name="Burton J."/>
            <person name="Ashurst J.L."/>
            <person name="Howe K.L."/>
            <person name="Ashcroft K.J."/>
            <person name="Beare D.M."/>
            <person name="Burford D.C."/>
            <person name="Hunt S.E."/>
            <person name="Griffiths-Jones S."/>
            <person name="Jones M.C."/>
            <person name="Keenan S.J."/>
            <person name="Oliver K."/>
            <person name="Scott C.E."/>
            <person name="Ainscough R."/>
            <person name="Almeida J.P."/>
            <person name="Ambrose K.D."/>
            <person name="Andrews D.T."/>
            <person name="Ashwell R.I.S."/>
            <person name="Babbage A.K."/>
            <person name="Bagguley C.L."/>
            <person name="Bailey J."/>
            <person name="Bannerjee R."/>
            <person name="Barlow K.F."/>
            <person name="Bates K."/>
            <person name="Beasley H."/>
            <person name="Bird C.P."/>
            <person name="Bray-Allen S."/>
            <person name="Brown A.J."/>
            <person name="Brown J.Y."/>
            <person name="Burrill W."/>
            <person name="Carder C."/>
            <person name="Carter N.P."/>
            <person name="Chapman J.C."/>
            <person name="Clamp M.E."/>
            <person name="Clark S.Y."/>
            <person name="Clarke G."/>
            <person name="Clee C.M."/>
            <person name="Clegg S.C."/>
            <person name="Cobley V."/>
            <person name="Collins J.E."/>
            <person name="Corby N."/>
            <person name="Coville G.J."/>
            <person name="Deloukas P."/>
            <person name="Dhami P."/>
            <person name="Dunham I."/>
            <person name="Dunn M."/>
            <person name="Earthrowl M.E."/>
            <person name="Ellington A.G."/>
            <person name="Faulkner L."/>
            <person name="Frankish A.G."/>
            <person name="Frankland J."/>
            <person name="French L."/>
            <person name="Garner P."/>
            <person name="Garnett J."/>
            <person name="Gilbert J.G.R."/>
            <person name="Gilson C.J."/>
            <person name="Ghori J."/>
            <person name="Grafham D.V."/>
            <person name="Gribble S.M."/>
            <person name="Griffiths C."/>
            <person name="Hall R.E."/>
            <person name="Hammond S."/>
            <person name="Harley J.L."/>
            <person name="Hart E.A."/>
            <person name="Heath P.D."/>
            <person name="Howden P.J."/>
            <person name="Huckle E.J."/>
            <person name="Hunt P.J."/>
            <person name="Hunt A.R."/>
            <person name="Johnson C."/>
            <person name="Johnson D."/>
            <person name="Kay M."/>
            <person name="Kimberley A.M."/>
            <person name="King A."/>
            <person name="Laird G.K."/>
            <person name="Langford C.J."/>
            <person name="Lawlor S."/>
            <person name="Leongamornlert D.A."/>
            <person name="Lloyd D.M."/>
            <person name="Lloyd C."/>
            <person name="Loveland J.E."/>
            <person name="Lovell J."/>
            <person name="Martin S."/>
            <person name="Mashreghi-Mohammadi M."/>
            <person name="McLaren S.J."/>
            <person name="McMurray A."/>
            <person name="Milne S."/>
            <person name="Moore M.J.F."/>
            <person name="Nickerson T."/>
            <person name="Palmer S.A."/>
            <person name="Pearce A.V."/>
            <person name="Peck A.I."/>
            <person name="Pelan S."/>
            <person name="Phillimore B."/>
            <person name="Porter K.M."/>
            <person name="Rice C.M."/>
            <person name="Searle S."/>
            <person name="Sehra H.K."/>
            <person name="Shownkeen R."/>
            <person name="Skuce C.D."/>
            <person name="Smith M."/>
            <person name="Steward C.A."/>
            <person name="Sycamore N."/>
            <person name="Tester J."/>
            <person name="Thomas D.W."/>
            <person name="Tracey A."/>
            <person name="Tromans A."/>
            <person name="Tubby B."/>
            <person name="Wall M."/>
            <person name="Wallis J.M."/>
            <person name="West A.P."/>
            <person name="Whitehead S.L."/>
            <person name="Willey D.L."/>
            <person name="Wilming L."/>
            <person name="Wray P.W."/>
            <person name="Wright M.W."/>
            <person name="Young L."/>
            <person name="Coulson A."/>
            <person name="Durbin R.M."/>
            <person name="Hubbard T."/>
            <person name="Sulston J.E."/>
            <person name="Beck S."/>
            <person name="Bentley D.R."/>
            <person name="Rogers J."/>
            <person name="Ross M.T."/>
        </authorList>
    </citation>
    <scope>NUCLEOTIDE SEQUENCE [LARGE SCALE GENOMIC DNA]</scope>
</reference>
<reference key="5">
    <citation type="journal article" date="2004" name="Genome Res.">
        <title>The status, quality, and expansion of the NIH full-length cDNA project: the Mammalian Gene Collection (MGC).</title>
        <authorList>
            <consortium name="The MGC Project Team"/>
        </authorList>
    </citation>
    <scope>NUCLEOTIDE SEQUENCE [LARGE SCALE MRNA] (ISOFORM 1)</scope>
    <source>
        <tissue>Lung</tissue>
    </source>
</reference>
<reference key="6">
    <citation type="journal article" date="1998" name="Genes Dev.">
        <title>A new NEDD8-ligating system for cullin-4A.</title>
        <authorList>
            <person name="Osaka F."/>
            <person name="Kawasaki H."/>
            <person name="Aida N."/>
            <person name="Saeki M."/>
            <person name="Chiba T."/>
            <person name="Kawashima S."/>
            <person name="Tanaka K."/>
            <person name="Kato S."/>
        </authorList>
    </citation>
    <scope>NUCLEOTIDE SEQUENCE [MRNA] OF 236-759 (ISOFORMS 1/2)</scope>
    <scope>NEDDYLATION</scope>
</reference>
<reference key="7">
    <citation type="journal article" date="1996" name="Cell">
        <title>cul-1 is required for cell cycle exit in C. elegans and identifies a novel gene family.</title>
        <authorList>
            <person name="Kipreos E.T."/>
            <person name="Lander L.E."/>
            <person name="Wing J.P."/>
            <person name="He W.W."/>
            <person name="Hedgecock E.M."/>
        </authorList>
    </citation>
    <scope>NUCLEOTIDE SEQUENCE [MRNA] OF 347-759 (ISOFORMS 1/2)</scope>
</reference>
<reference key="8">
    <citation type="journal article" date="1999" name="Oncogene">
        <title>Covalent modification of all members of human cullin family proteins by NEDD8.</title>
        <authorList>
            <person name="Hori T."/>
            <person name="Osaka F."/>
            <person name="Chiba T."/>
            <person name="Miyamoto C."/>
            <person name="Okabayashi K."/>
            <person name="Shimbara N."/>
            <person name="Kato S."/>
            <person name="Tanaka K."/>
        </authorList>
    </citation>
    <scope>NEDDYLATION</scope>
</reference>
<reference key="9">
    <citation type="journal article" date="1999" name="Mol. Cell">
        <title>ROC1, a homolog of APC11, represents a family of cullin partners with an associated ubiquitin ligase activity.</title>
        <authorList>
            <person name="Ohta T."/>
            <person name="Michel J.J."/>
            <person name="Schottelius A.J."/>
            <person name="Xiong Y."/>
        </authorList>
    </citation>
    <scope>INTERACTION WITH RBX1 AND RNF7</scope>
</reference>
<reference key="10">
    <citation type="journal article" date="2003" name="Cell">
        <title>The ubiquitin ligase activity in the DDB2 and CSA complexes is differentially regulated by the COP9 signalosome in response to DNA damage.</title>
        <authorList>
            <person name="Groisman R."/>
            <person name="Polanowska J."/>
            <person name="Kuraoka I."/>
            <person name="Sawada J."/>
            <person name="Saijo M."/>
            <person name="Drapkin R."/>
            <person name="Kisselev A.F."/>
            <person name="Tanaka K."/>
            <person name="Nakatani Y."/>
        </authorList>
    </citation>
    <scope>FUNCTION</scope>
    <scope>IDENTIFICATION IN THE CSA COMPLEX WITH RBX1; DDB1 AND ERCC8</scope>
    <scope>INTERACTION OF THE CSA COMPLEX WITH RNA POLYMERASE II AND THE COP9 SIGNALOSOME</scope>
</reference>
<reference key="11">
    <citation type="journal article" date="2003" name="EMBO J.">
        <title>CUL-4A stimulates ubiquitylation and degradation of the HOXA9 homeodomain protein.</title>
        <authorList>
            <person name="Zhang Y."/>
            <person name="Morrone G."/>
            <person name="Zhang J."/>
            <person name="Chen X."/>
            <person name="Lu X."/>
            <person name="Ma L."/>
            <person name="Moore M."/>
            <person name="Zhou P."/>
        </authorList>
    </citation>
    <scope>INTERACTION WITH HOXA9</scope>
    <scope>FUNCTION IN UBIQUITINATION OF HOXA9</scope>
    <scope>PATHWAY</scope>
</reference>
<reference key="12">
    <citation type="journal article" date="2003" name="J. Biol. Chem.">
        <title>TIP120A associates with cullins and modulates ubiquitin ligase activity.</title>
        <authorList>
            <person name="Min K.-W."/>
            <person name="Hwang J.-W."/>
            <person name="Lee J.-S."/>
            <person name="Park Y."/>
            <person name="Tamura T.-A."/>
            <person name="Yoon J.-B."/>
        </authorList>
    </citation>
    <scope>INTERACTION WITH TIP120A</scope>
</reference>
<reference key="13">
    <citation type="journal article" date="2004" name="Cancer Res.">
        <title>Cul4A physically associates with MDM2 and participates in the proteolysis of p53.</title>
        <authorList>
            <person name="Nag A."/>
            <person name="Bagchi S."/>
            <person name="Raychaudhuri P."/>
        </authorList>
    </citation>
    <scope>INTERACTION WITH MDM2 AND TP53</scope>
    <scope>FUNCTION IN UBIQUITINATION OF TP53</scope>
    <scope>PATHWAY</scope>
</reference>
<reference key="14">
    <citation type="journal article" date="2004" name="Nat. Cell Biol.">
        <title>Targeted ubiquitination of CDT1 by the DDB1-CUL4A-ROC1 ligase in response to DNA damage.</title>
        <authorList>
            <person name="Hu J."/>
            <person name="McCall C.M."/>
            <person name="Ohta T."/>
            <person name="Xiong Y."/>
        </authorList>
    </citation>
    <scope>INTERACTION WITH DDB1</scope>
    <scope>FUNCTION IN CDT1 UBIQUITINATION</scope>
    <scope>PATHWAY</scope>
</reference>
<reference key="15">
    <citation type="journal article" date="2004" name="Science">
        <title>Human De-etiolated-1 regulates c-Jun by assembling a CUL4A ubiquitin ligase.</title>
        <authorList>
            <person name="Wertz I.E."/>
            <person name="O'Rourke K.M."/>
            <person name="Zhang Z."/>
            <person name="Dornan D."/>
            <person name="Arnott D."/>
            <person name="Deshaies R.J."/>
            <person name="Dixit V.M."/>
        </authorList>
    </citation>
    <scope>FUNCTION</scope>
    <scope>IDENTIFICATION IN THE DCX(DET1-COP1) COMPLEX WITH DDB1; RBX1; COP1 AND DET1</scope>
</reference>
<reference key="16">
    <citation type="journal article" date="2006" name="EMBO J.">
        <title>Two E3 ubiquitin ligases, SCF-Skp2 and DDB1-Cul4, target human Cdt1 for proteolysis.</title>
        <authorList>
            <person name="Nishitani H."/>
            <person name="Sugimoto N."/>
            <person name="Roukos V."/>
            <person name="Nakanishi Y."/>
            <person name="Saijo M."/>
            <person name="Obuse C."/>
            <person name="Tsurimoto T."/>
            <person name="Nakayama K.I."/>
            <person name="Nakayama K."/>
            <person name="Fujita M."/>
            <person name="Lygerou Z."/>
            <person name="Nishimoto T."/>
        </authorList>
    </citation>
    <scope>INTERACTION WITH DDB1; DDB2 AND CAND1</scope>
    <scope>MUTAGENESIS OF 86-LEU--VAL-90 AND 139-TRP--HIS-142</scope>
</reference>
<reference key="17">
    <citation type="journal article" date="2006" name="Genes Dev.">
        <title>DDB1 functions as a linker to recruit receptor WD40 proteins to CUL4-ROC1 ubiquitin ligases.</title>
        <authorList>
            <person name="He Y.J."/>
            <person name="McCall C.M."/>
            <person name="Hu J."/>
            <person name="Zeng Y."/>
            <person name="Xiong Y."/>
        </authorList>
    </citation>
    <scope>INTERACTION WITH DCAF1; DDB2; ERCC8; DCAF11; GRWD1; COP1; FBXW5; RBBP7; GNB2; WSB1; WSB2; NUP43; PWP1; FBXW8; ATG16L1; KATNB1 AND RBBP4</scope>
    <scope>MUTAGENESIS OF 86-LEU--VAL-90 AND 139-TRP--HIS-142</scope>
</reference>
<reference key="18">
    <citation type="journal article" date="2006" name="Mol. Cell">
        <title>Histone H3 and H4 ubiquitylation by the CUL4-DDB-ROC1 ubiquitin ligase facilitates cellular response to DNA damage.</title>
        <authorList>
            <person name="Wang H."/>
            <person name="Zhai L."/>
            <person name="Xu J."/>
            <person name="Joo H.-Y."/>
            <person name="Jackson S."/>
            <person name="Erdjument-Bromage H."/>
            <person name="Tempst P."/>
            <person name="Xiong Y."/>
            <person name="Zhang Y."/>
        </authorList>
    </citation>
    <scope>IDENTIFICATION IN COMPLEX WITH DDB1; DDB2 AND RBX1</scope>
    <scope>IDENTIFICATION BY MASS SPECTROMETRY</scope>
    <scope>FUNCTION</scope>
</reference>
<reference key="19">
    <citation type="journal article" date="2006" name="Mol. Cell">
        <title>A family of diverse Cul4-Ddb1-interacting proteins includes Cdt2, which is required for S phase destruction of the replication factor Cdt1.</title>
        <authorList>
            <person name="Jin J."/>
            <person name="Arias E.E."/>
            <person name="Chen J."/>
            <person name="Harper J.W."/>
            <person name="Walter J.C."/>
        </authorList>
    </citation>
    <scope>INTERACTION WITH DCAF1; DTL; DDA1; DCAF6; DCAF4; DCAF16; DCAF17; DDB2; DET1; WDTC1; DCAF5; DCAF11; WDR24A; COP1; PAFAH1B1 AND DCAF8</scope>
</reference>
<reference key="20">
    <citation type="journal article" date="2006" name="Mol. Cell. Biol.">
        <title>Cul4A and DDB1 associate with Skp2 to target p27Kip1 for proteolysis involving the COP9 signalosome.</title>
        <authorList>
            <person name="Bondar T."/>
            <person name="Kalinina A."/>
            <person name="Khair L."/>
            <person name="Kopanja D."/>
            <person name="Nag A."/>
            <person name="Bagchi S."/>
            <person name="Raychaudhuri P."/>
        </authorList>
    </citation>
    <scope>INTERACTION WITH SKP2 AND CDKN1B</scope>
    <scope>FUNCTION IN UBIQUITINATION OF CDKN1B</scope>
    <scope>PATHWAY</scope>
</reference>
<reference key="21">
    <citation type="journal article" date="2006" name="Nat. Cell Biol.">
        <title>CUL4-DDB1 ubiquitin ligase interacts with multiple WD40-repeat proteins and regulates histone methylation.</title>
        <authorList>
            <person name="Higa L.A."/>
            <person name="Wu M."/>
            <person name="Ye T."/>
            <person name="Kobayashi R."/>
            <person name="Sun H."/>
            <person name="Zhang H."/>
        </authorList>
    </citation>
    <scope>FUNCTION</scope>
    <scope>INTERACTION WITH DDB2; WDR26; RBBP5; COP1; WDR51B; SNRNP40; WDR61; WDR76 AND WDR5</scope>
</reference>
<reference key="22">
    <citation type="journal article" date="2007" name="Cell. Signal.">
        <title>Characterization of cullin-based E3 ubiquitin ligases in intact mammalian cells -- evidence for cullin dimerization.</title>
        <authorList>
            <person name="Chew E.H."/>
            <person name="Poobalasingam T."/>
            <person name="Hawkey C.J."/>
            <person name="Hagen T."/>
        </authorList>
    </citation>
    <scope>SELF-ASSOCIATION</scope>
</reference>
<reference key="23">
    <citation type="journal article" date="2008" name="Mol. Cell">
        <title>Kinase-selective enrichment enables quantitative phosphoproteomics of the kinome across the cell cycle.</title>
        <authorList>
            <person name="Daub H."/>
            <person name="Olsen J.V."/>
            <person name="Bairlein M."/>
            <person name="Gnad F."/>
            <person name="Oppermann F.S."/>
            <person name="Korner R."/>
            <person name="Greff Z."/>
            <person name="Keri G."/>
            <person name="Stemmann O."/>
            <person name="Mann M."/>
        </authorList>
    </citation>
    <scope>IDENTIFICATION BY MASS SPECTROMETRY [LARGE SCALE ANALYSIS]</scope>
    <source>
        <tissue>Cervix carcinoma</tissue>
    </source>
</reference>
<reference key="24">
    <citation type="journal article" date="2008" name="Proc. Natl. Acad. Sci. U.S.A.">
        <title>A quantitative atlas of mitotic phosphorylation.</title>
        <authorList>
            <person name="Dephoure N."/>
            <person name="Zhou C."/>
            <person name="Villen J."/>
            <person name="Beausoleil S.A."/>
            <person name="Bakalarski C.E."/>
            <person name="Elledge S.J."/>
            <person name="Gygi S.P."/>
        </authorList>
    </citation>
    <scope>PHOSPHORYLATION [LARGE SCALE ANALYSIS] AT SER-10</scope>
    <scope>IDENTIFICATION BY MASS SPECTROMETRY [LARGE SCALE ANALYSIS]</scope>
    <source>
        <tissue>Cervix carcinoma</tissue>
    </source>
</reference>
<reference key="25">
    <citation type="journal article" date="2010" name="Nat. Cell Biol.">
        <title>A deneddylase encoded by Epstein-Barr virus promotes viral DNA replication by regulating the activity of cullin-RING ligases.</title>
        <authorList>
            <person name="Gastaldello S."/>
            <person name="Hildebrand S."/>
            <person name="Faridani O."/>
            <person name="Callegari S."/>
            <person name="Palmkvist M."/>
            <person name="Di Guglielmo C."/>
            <person name="Masucci M.G."/>
        </authorList>
    </citation>
    <scope>INTERACTION WITH EPSTEIN-BARR VIRUS BPLF1 (MICROBIAL INFECTION)</scope>
    <scope>DENEDDYLATION BY EPSTEIN-BARR VIRUS BPLF1 (MICROBIAL INFECTION)</scope>
</reference>
<reference key="26">
    <citation type="journal article" date="2010" name="Sci. Signal.">
        <title>Quantitative phosphoproteomics reveals widespread full phosphorylation site occupancy during mitosis.</title>
        <authorList>
            <person name="Olsen J.V."/>
            <person name="Vermeulen M."/>
            <person name="Santamaria A."/>
            <person name="Kumar C."/>
            <person name="Miller M.L."/>
            <person name="Jensen L.J."/>
            <person name="Gnad F."/>
            <person name="Cox J."/>
            <person name="Jensen T.S."/>
            <person name="Nigg E.A."/>
            <person name="Brunak S."/>
            <person name="Mann M."/>
        </authorList>
    </citation>
    <scope>PHOSPHORYLATION [LARGE SCALE ANALYSIS] AT SER-10</scope>
    <scope>IDENTIFICATION BY MASS SPECTROMETRY [LARGE SCALE ANALYSIS]</scope>
    <source>
        <tissue>Cervix carcinoma</tissue>
    </source>
</reference>
<reference key="27">
    <citation type="journal article" date="2011" name="BMC Syst. Biol.">
        <title>Initial characterization of the human central proteome.</title>
        <authorList>
            <person name="Burkard T.R."/>
            <person name="Planyavsky M."/>
            <person name="Kaupe I."/>
            <person name="Breitwieser F.P."/>
            <person name="Buerckstuemmer T."/>
            <person name="Bennett K.L."/>
            <person name="Superti-Furga G."/>
            <person name="Colinge J."/>
        </authorList>
    </citation>
    <scope>IDENTIFICATION BY MASS SPECTROMETRY [LARGE SCALE ANALYSIS]</scope>
</reference>
<reference key="28">
    <citation type="journal article" date="2012" name="Cell Cycle">
        <title>Orc2 protects ORCA from ubiquitin-mediated degradation.</title>
        <authorList>
            <person name="Shen Z."/>
            <person name="Prasanth S.G."/>
        </authorList>
    </citation>
    <scope>INTERACTION WITH LRWD1</scope>
</reference>
<reference key="29">
    <citation type="journal article" date="2013" name="Cell">
        <title>A Cul4 E3 ubiquitin ligase regulates histone hand-off during nucleosome assembly.</title>
        <authorList>
            <person name="Han J."/>
            <person name="Zhang H."/>
            <person name="Zhang H."/>
            <person name="Wang Z."/>
            <person name="Zhou H."/>
            <person name="Zhang Z."/>
        </authorList>
    </citation>
    <scope>FUNCTION IN UBIQUITINATION OF H3</scope>
    <scope>PATHWAY</scope>
</reference>
<reference key="30">
    <citation type="journal article" date="2013" name="EMBO J.">
        <title>TRIAD1 and HHARI bind to and are activated by distinct neddylated Cullin-RING ligase complexes.</title>
        <authorList>
            <person name="Kelsall I.R."/>
            <person name="Duda D.M."/>
            <person name="Olszewski J.L."/>
            <person name="Hofmann K."/>
            <person name="Knebel A."/>
            <person name="Langevin F."/>
            <person name="Wood N."/>
            <person name="Wightman M."/>
            <person name="Schulman B.A."/>
            <person name="Alpi A.F."/>
        </authorList>
    </citation>
    <scope>INTERACTION WITH ARIH1</scope>
    <scope>NEDDYLATION</scope>
</reference>
<reference key="31">
    <citation type="journal article" date="2013" name="J. Proteome Res.">
        <title>Toward a comprehensive characterization of a human cancer cell phosphoproteome.</title>
        <authorList>
            <person name="Zhou H."/>
            <person name="Di Palma S."/>
            <person name="Preisinger C."/>
            <person name="Peng M."/>
            <person name="Polat A.N."/>
            <person name="Heck A.J."/>
            <person name="Mohammed S."/>
        </authorList>
    </citation>
    <scope>PHOSPHORYLATION [LARGE SCALE ANALYSIS] AT SER-10</scope>
    <scope>IDENTIFICATION BY MASS SPECTROMETRY [LARGE SCALE ANALYSIS]</scope>
    <source>
        <tissue>Cervix carcinoma</tissue>
        <tissue>Erythroleukemia</tissue>
    </source>
</reference>
<reference key="32">
    <citation type="journal article" date="2013" name="Mol. Cell">
        <title>CRL1-FBXO11 promotes Cdt2 ubiquitylation and degradation and regulates Pr-Set7/Set8-mediated cellular migration.</title>
        <authorList>
            <person name="Abbas T."/>
            <person name="Mueller A.C."/>
            <person name="Shibata E."/>
            <person name="Keaton M."/>
            <person name="Rossi M."/>
            <person name="Dutta A."/>
        </authorList>
    </citation>
    <scope>FUNCTION IN UBIQUITINATION OF DTL</scope>
    <scope>PATHWAY</scope>
</reference>
<reference key="33">
    <citation type="journal article" date="2013" name="Structure">
        <title>Structural conservation of distinctive N-terminal acetylation-dependent interactions across a family of mammalian NEDD8 ligation enzymes.</title>
        <authorList>
            <person name="Monda J.K."/>
            <person name="Scott D.C."/>
            <person name="Miller D.J."/>
            <person name="Lydeard J."/>
            <person name="King D."/>
            <person name="Harper J.W."/>
            <person name="Bennett E.J."/>
            <person name="Schulman B.A."/>
        </authorList>
    </citation>
    <scope>INTERACTION WITH DCUN1D1; DCUN1D2; DCUN1D3; DCUN1D4 AND DCUN1D5</scope>
</reference>
<reference key="34">
    <citation type="journal article" date="2014" name="J. Proteomics">
        <title>An enzyme assisted RP-RPLC approach for in-depth analysis of human liver phosphoproteome.</title>
        <authorList>
            <person name="Bian Y."/>
            <person name="Song C."/>
            <person name="Cheng K."/>
            <person name="Dong M."/>
            <person name="Wang F."/>
            <person name="Huang J."/>
            <person name="Sun D."/>
            <person name="Wang L."/>
            <person name="Ye M."/>
            <person name="Zou H."/>
        </authorList>
    </citation>
    <scope>PHOSPHORYLATION [LARGE SCALE ANALYSIS] AT SER-10</scope>
    <scope>IDENTIFICATION BY MASS SPECTROMETRY [LARGE SCALE ANALYSIS]</scope>
    <source>
        <tissue>Liver</tissue>
    </source>
</reference>
<reference key="35">
    <citation type="journal article" date="2015" name="Cell Rep.">
        <title>Genome-wide RNAi Screening Identifies Protein Modules Required for 40S Subunit Synthesis in Human Cells.</title>
        <authorList>
            <person name="Badertscher L."/>
            <person name="Wild T."/>
            <person name="Montellese C."/>
            <person name="Alexander L.T."/>
            <person name="Bammert L."/>
            <person name="Sarazova M."/>
            <person name="Stebler M."/>
            <person name="Csucs G."/>
            <person name="Mayer T.U."/>
            <person name="Zamboni N."/>
            <person name="Zemp I."/>
            <person name="Horvath P."/>
            <person name="Kutay U."/>
        </authorList>
    </citation>
    <scope>FUNCTION</scope>
</reference>
<reference key="36">
    <citation type="journal article" date="2015" name="PLoS ONE">
        <title>CUL4-DDB1-CDT2 E3 ligase regulates the molecular clock activity by promoting ubiquitination-dependent degradation of the mammalian CRY1.</title>
        <authorList>
            <person name="Tong X."/>
            <person name="Zhang D."/>
            <person name="Guha A."/>
            <person name="Arthurs B."/>
            <person name="Cazares V."/>
            <person name="Gupta N."/>
            <person name="Yin L."/>
        </authorList>
    </citation>
    <scope>FUNCTION</scope>
    <scope>INTERACTION WITH DDB1 AND CRY1</scope>
</reference>
<reference key="37">
    <citation type="journal article" date="2016" name="J. Cell Sci.">
        <title>Characterization of the mammalian family of DCN-type NEDD8 E3 ligases.</title>
        <authorList>
            <person name="Keuss M.J."/>
            <person name="Thomas Y."/>
            <person name="Mcarthur R."/>
            <person name="Wood N.T."/>
            <person name="Knebel A."/>
            <person name="Kurz T."/>
        </authorList>
    </citation>
    <scope>INTERACTION WITH DCUN1D1; DCUN1D2; DCUN1D3 AND DCUN1D5</scope>
</reference>
<reference key="38">
    <citation type="journal article" date="2017" name="Nat. Struct. Mol. Biol.">
        <title>Site-specific mapping of the human SUMO proteome reveals co-modification with phosphorylation.</title>
        <authorList>
            <person name="Hendriks I.A."/>
            <person name="Lyon D."/>
            <person name="Young C."/>
            <person name="Jensen L.J."/>
            <person name="Vertegaal A.C."/>
            <person name="Nielsen M.L."/>
        </authorList>
    </citation>
    <scope>SUMOYLATION [LARGE SCALE ANALYSIS] AT LYS-8</scope>
    <scope>IDENTIFICATION BY MASS SPECTROMETRY [LARGE SCALE ANALYSIS]</scope>
</reference>
<reference key="39">
    <citation type="journal article" date="2018" name="Cell">
        <title>The eukaryotic proteome is shaped by E3 ubiquitin ligases targeting C-terminal degrons.</title>
        <authorList>
            <person name="Koren I."/>
            <person name="Timms R.T."/>
            <person name="Kula T."/>
            <person name="Xu Q."/>
            <person name="Li M.Z."/>
            <person name="Elledge S.J."/>
        </authorList>
    </citation>
    <scope>FUNCTION</scope>
    <scope>PATHWAY</scope>
</reference>
<reference key="40">
    <citation type="journal article" date="2018" name="EMBO J.">
        <title>CRL4AMBRA1 targets Elongin C for ubiquitination and degradation to modulate CRL5 signaling.</title>
        <authorList>
            <person name="Chen S.H."/>
            <person name="Jang G.M."/>
            <person name="Huettenhain R."/>
            <person name="Gordon D.E."/>
            <person name="Du D."/>
            <person name="Newton B.W."/>
            <person name="Johnson J.R."/>
            <person name="Hiatt J."/>
            <person name="Hultquist J.F."/>
            <person name="Johnson T.L."/>
            <person name="Liu Y.L."/>
            <person name="Burton L.A."/>
            <person name="Ye J."/>
            <person name="Reichermeier K.M."/>
            <person name="Stroud R.M."/>
            <person name="Marson A."/>
            <person name="Debnath J."/>
            <person name="Gross J.D."/>
            <person name="Krogan N.J."/>
        </authorList>
    </citation>
    <scope>FUNCTION</scope>
    <scope>PATHWAY</scope>
</reference>
<reference key="41">
    <citation type="journal article" date="2020" name="Nat. Commun.">
        <title>The cooperative action of CSB, CSA, and UVSSA target TFIIH to DNA damage-stalled RNA polymerase II.</title>
        <authorList>
            <person name="van der Weegen Y."/>
            <person name="Golan-Berman H."/>
            <person name="Mevissen T.E.T."/>
            <person name="Apelt K."/>
            <person name="Gonzalez-Prieto R."/>
            <person name="Goedhart J."/>
            <person name="Heilbrun E.E."/>
            <person name="Vertegaal A.C.O."/>
            <person name="van den Heuvel D."/>
            <person name="Walter J.C."/>
            <person name="Adar S."/>
            <person name="Luijsterburg M.S."/>
        </authorList>
    </citation>
    <scope>FUNCTION</scope>
    <scope>IDENTIFICATION IN A DCX (DDB1-CUL4-X-BOX) E3 UBIQUITIN-PROTEIN LIGASE COMPLEX</scope>
</reference>
<reference key="42">
    <citation type="journal article" date="2021" name="Nature">
        <title>AMBRA1 regulates cyclin D to guard S-phase entry and genomic integrity.</title>
        <authorList>
            <person name="Maiani E."/>
            <person name="Milletti G."/>
            <person name="Nazio F."/>
            <person name="Holdgaard S.G."/>
            <person name="Bartkova J."/>
            <person name="Rizza S."/>
            <person name="Cianfanelli V."/>
            <person name="Lorente M."/>
            <person name="Simoneschi D."/>
            <person name="Di Marco M."/>
            <person name="D'Acunzo P."/>
            <person name="Di Leo L."/>
            <person name="Rasmussen R."/>
            <person name="Montagna C."/>
            <person name="Raciti M."/>
            <person name="De Stefanis C."/>
            <person name="Gabicagogeascoa E."/>
            <person name="Rona G."/>
            <person name="Salvador N."/>
            <person name="Pupo E."/>
            <person name="Merchut-Maya J.M."/>
            <person name="Daniel C.J."/>
            <person name="Carinci M."/>
            <person name="Cesarini V."/>
            <person name="O'sullivan A."/>
            <person name="Jeong Y.T."/>
            <person name="Bordi M."/>
            <person name="Russo F."/>
            <person name="Campello S."/>
            <person name="Gallo A."/>
            <person name="Filomeni G."/>
            <person name="Lanzetti L."/>
            <person name="Sears R.C."/>
            <person name="Hamerlik P."/>
            <person name="Bartolazzi A."/>
            <person name="Hynds R.E."/>
            <person name="Pearce D.R."/>
            <person name="Swanton C."/>
            <person name="Pagano M."/>
            <person name="Velasco G."/>
            <person name="Papaleo E."/>
            <person name="De Zio D."/>
            <person name="Maya-Mendoza A."/>
            <person name="Locatelli F."/>
            <person name="Bartek J."/>
            <person name="Cecconi F."/>
        </authorList>
    </citation>
    <scope>FUNCTION</scope>
    <scope>IDENTIFICATION IN A DCX (DDB1-CUL4-X-BOX) E3 UBIQUITIN-PROTEIN LIGASE COMPLEX</scope>
    <scope>PATHWAY</scope>
</reference>
<reference key="43">
    <citation type="journal article" date="2021" name="Nature">
        <title>The AMBRA1 E3 ligase adaptor regulates the stability of cyclin D.</title>
        <authorList>
            <person name="Chaikovsky A.C."/>
            <person name="Li C."/>
            <person name="Jeng E.E."/>
            <person name="Loebell S."/>
            <person name="Lee M.C."/>
            <person name="Murray C.W."/>
            <person name="Cheng R."/>
            <person name="Demeter J."/>
            <person name="Swaney D.L."/>
            <person name="Chen S.H."/>
            <person name="Newton B.W."/>
            <person name="Johnson J.R."/>
            <person name="Drainas A.P."/>
            <person name="Shue Y.T."/>
            <person name="Seoane J.A."/>
            <person name="Srinivasan P."/>
            <person name="He A."/>
            <person name="Yoshida A."/>
            <person name="Hipkins S.Q."/>
            <person name="McCrea E."/>
            <person name="Poltorack C.D."/>
            <person name="Krogan N.J."/>
            <person name="Diehl J.A."/>
            <person name="Kong C."/>
            <person name="Jackson P.K."/>
            <person name="Curtis C."/>
            <person name="Petrov D.A."/>
            <person name="Bassik M.C."/>
            <person name="Winslow M.M."/>
            <person name="Sage J."/>
        </authorList>
    </citation>
    <scope>FUNCTION</scope>
    <scope>IDENTIFICATION IN A DCX (DDB1-CUL4-X-BOX) E3 UBIQUITIN-PROTEIN LIGASE COMPLEX</scope>
    <scope>PATHWAY</scope>
</reference>
<reference key="44">
    <citation type="journal article" date="2006" name="Nature">
        <title>Molecular architecture and assembly of the DDB1-CUL4A ubiquitin ligase machinery.</title>
        <authorList>
            <person name="Angers S."/>
            <person name="Li T."/>
            <person name="Yi X."/>
            <person name="MacCoss M.J."/>
            <person name="Moon R.T."/>
            <person name="Zheng N."/>
        </authorList>
    </citation>
    <scope>X-RAY CRYSTALLOGRAPHY (3.10 ANGSTROMS) IN COMPLEX WITH DDB1; RBX1 AND SV5-V</scope>
</reference>
<reference key="45">
    <citation type="journal article" date="2011" name="Cell">
        <title>The molecular basis of CRL4DDB2/CSA ubiquitin ligase architecture, targeting, and activation.</title>
        <authorList>
            <person name="Fischer E.S."/>
            <person name="Scrima A."/>
            <person name="Bohm K."/>
            <person name="Matsumoto S."/>
            <person name="Lingaraju G.M."/>
            <person name="Faty M."/>
            <person name="Yasuda T."/>
            <person name="Cavadini S."/>
            <person name="Wakasugi M."/>
            <person name="Hanaoka F."/>
            <person name="Iwai S."/>
            <person name="Gut H."/>
            <person name="Sugasawa K."/>
            <person name="Thoma N.H."/>
        </authorList>
    </citation>
    <scope>X-RAY CRYSTALLOGRAPHY (5.93 ANGSTROMS) OF 38-759 IN COMPLEX WITH DDB1; RBX1 AND DDB2</scope>
</reference>
<reference evidence="41 42" key="46">
    <citation type="journal article" date="2024" name="Nat. Struct. Mol. Biol.">
        <title>Structural basis for RNA polymerase II ubiquitylation and inactivation in transcription-coupled repair.</title>
        <authorList>
            <person name="Kokic G."/>
            <person name="Yakoub G."/>
            <person name="van den Heuvel D."/>
            <person name="Wondergem A.P."/>
            <person name="van der Meer P.J."/>
            <person name="van der Weegen Y."/>
            <person name="Chernev A."/>
            <person name="Fianu I."/>
            <person name="Fokkens T.J."/>
            <person name="Lorenz S."/>
            <person name="Urlaub H."/>
            <person name="Cramer P."/>
            <person name="Luijsterburg M.S."/>
        </authorList>
    </citation>
    <scope>STRUCTURE BY ELECTRON MICROSCOPY (3.50 ANGSTROMS) IN COMPLEX WITH E3 UBIQUITIN-PROTEIN LIGASE COMPLEX</scope>
    <scope>IDENTIFICATION IN A DCX (DDB1-CUL4-X-BOX) E3 UBIQUITIN-PROTEIN LIGASE COMPLEX</scope>
    <scope>FUNCTION</scope>
    <scope>NEDDYLATION AT LYS-705</scope>
</reference>